<name>TBA_TETPY</name>
<reference key="1">
    <citation type="journal article" date="1988" name="J. Mol. Biol.">
        <title>Sequence of one alpha- and two beta-tubulin genes of Tetrahymena pyriformis. Structural and functional relationships with other eukaryotic tubulin genes.</title>
        <authorList>
            <person name="Barahona I."/>
            <person name="Soares H."/>
            <person name="Cyrne L."/>
            <person name="Penque D."/>
            <person name="Denoulet P."/>
            <person name="Rodrigues-Pousada C."/>
        </authorList>
    </citation>
    <scope>NUCLEOTIDE SEQUENCE [GENOMIC DNA]</scope>
    <source>
        <strain>CGL</strain>
    </source>
</reference>
<organism>
    <name type="scientific">Tetrahymena pyriformis</name>
    <dbReference type="NCBI Taxonomy" id="5908"/>
    <lineage>
        <taxon>Eukaryota</taxon>
        <taxon>Sar</taxon>
        <taxon>Alveolata</taxon>
        <taxon>Ciliophora</taxon>
        <taxon>Intramacronucleata</taxon>
        <taxon>Oligohymenophorea</taxon>
        <taxon>Hymenostomatida</taxon>
        <taxon>Tetrahymenina</taxon>
        <taxon>Tetrahymenidae</taxon>
        <taxon>Tetrahymena</taxon>
    </lineage>
</organism>
<comment type="function">
    <text>Tubulin is the major constituent of microtubules, a cylinder consisting of laterally associated linear protofilaments composed of alpha- and beta-tubulin heterodimers. Microtubules grow by the addition of GTP-tubulin dimers to the microtubule end, where a stabilizing cap forms. Below the cap, tubulin dimers are in GDP-bound state, owing to GTPase activity of alpha-tubulin.</text>
</comment>
<comment type="catalytic activity">
    <reaction evidence="2">
        <text>GTP + H2O = GDP + phosphate + H(+)</text>
        <dbReference type="Rhea" id="RHEA:19669"/>
        <dbReference type="ChEBI" id="CHEBI:15377"/>
        <dbReference type="ChEBI" id="CHEBI:15378"/>
        <dbReference type="ChEBI" id="CHEBI:37565"/>
        <dbReference type="ChEBI" id="CHEBI:43474"/>
        <dbReference type="ChEBI" id="CHEBI:58189"/>
    </reaction>
    <physiologicalReaction direction="left-to-right" evidence="2">
        <dbReference type="Rhea" id="RHEA:19670"/>
    </physiologicalReaction>
</comment>
<comment type="cofactor">
    <cofactor evidence="2">
        <name>Mg(2+)</name>
        <dbReference type="ChEBI" id="CHEBI:18420"/>
    </cofactor>
</comment>
<comment type="subunit">
    <text>Dimer of alpha and beta chains. A typical microtubule is a hollow water-filled tube with an outer diameter of 25 nm and an inner diameter of 15 nM. Alpha-beta heterodimers associate head-to-tail to form protofilaments running lengthwise along the microtubule wall with the beta-tubulin subunit facing the microtubule plus end conferring a structural polarity. Microtubules usually have 13 protofilaments but different protofilament numbers can be found in some organisms and specialized cells.</text>
</comment>
<comment type="subcellular location">
    <subcellularLocation>
        <location>Cytoplasm</location>
        <location>Cytoskeleton</location>
    </subcellularLocation>
</comment>
<comment type="PTM">
    <text evidence="1">Undergoes a tyrosination/detyrosination cycle, the cyclic removal and re-addition of a C-terminal tyrosine residue by the enzymes tubulin tyrosine carboxypeptidase (TTCP) and tubulin tyrosine ligase (TTL), respectively.</text>
</comment>
<comment type="PTM">
    <text evidence="1">Acetylation of alpha chains at Lys-40 stabilizes microtubules and affects affinity and processivity of microtubule motors. This modification has a role in multiple cellular functions, ranging from cell motility, cell cycle progression or cell differentiation to intracellular trafficking and signaling (By similarity).</text>
</comment>
<comment type="similarity">
    <text evidence="3">Belongs to the tubulin family.</text>
</comment>
<proteinExistence type="inferred from homology"/>
<evidence type="ECO:0000250" key="1"/>
<evidence type="ECO:0000250" key="2">
    <source>
        <dbReference type="UniProtKB" id="P68363"/>
    </source>
</evidence>
<evidence type="ECO:0000305" key="3"/>
<dbReference type="EC" id="3.6.5.-" evidence="2"/>
<dbReference type="EMBL" id="X12767">
    <property type="protein sequence ID" value="CAA31256.1"/>
    <property type="molecule type" value="Genomic_DNA"/>
</dbReference>
<dbReference type="PIR" id="S01767">
    <property type="entry name" value="S01767"/>
</dbReference>
<dbReference type="SMR" id="P10872"/>
<dbReference type="GO" id="GO:0005737">
    <property type="term" value="C:cytoplasm"/>
    <property type="evidence" value="ECO:0007669"/>
    <property type="project" value="UniProtKB-KW"/>
</dbReference>
<dbReference type="GO" id="GO:0005874">
    <property type="term" value="C:microtubule"/>
    <property type="evidence" value="ECO:0007669"/>
    <property type="project" value="UniProtKB-KW"/>
</dbReference>
<dbReference type="GO" id="GO:0005525">
    <property type="term" value="F:GTP binding"/>
    <property type="evidence" value="ECO:0007669"/>
    <property type="project" value="UniProtKB-KW"/>
</dbReference>
<dbReference type="GO" id="GO:0016787">
    <property type="term" value="F:hydrolase activity"/>
    <property type="evidence" value="ECO:0007669"/>
    <property type="project" value="UniProtKB-KW"/>
</dbReference>
<dbReference type="GO" id="GO:0046872">
    <property type="term" value="F:metal ion binding"/>
    <property type="evidence" value="ECO:0007669"/>
    <property type="project" value="UniProtKB-KW"/>
</dbReference>
<dbReference type="GO" id="GO:0005200">
    <property type="term" value="F:structural constituent of cytoskeleton"/>
    <property type="evidence" value="ECO:0007669"/>
    <property type="project" value="InterPro"/>
</dbReference>
<dbReference type="GO" id="GO:0007017">
    <property type="term" value="P:microtubule-based process"/>
    <property type="evidence" value="ECO:0007669"/>
    <property type="project" value="InterPro"/>
</dbReference>
<dbReference type="CDD" id="cd02186">
    <property type="entry name" value="alpha_tubulin"/>
    <property type="match status" value="1"/>
</dbReference>
<dbReference type="FunFam" id="1.10.287.600:FF:000005">
    <property type="entry name" value="Tubulin alpha chain"/>
    <property type="match status" value="1"/>
</dbReference>
<dbReference type="FunFam" id="3.30.1330.20:FF:000001">
    <property type="entry name" value="Tubulin alpha chain"/>
    <property type="match status" value="1"/>
</dbReference>
<dbReference type="FunFam" id="3.40.50.1440:FF:000004">
    <property type="entry name" value="Tubulin alpha chain"/>
    <property type="match status" value="1"/>
</dbReference>
<dbReference type="Gene3D" id="1.10.287.600">
    <property type="entry name" value="Helix hairpin bin"/>
    <property type="match status" value="1"/>
</dbReference>
<dbReference type="Gene3D" id="3.30.1330.20">
    <property type="entry name" value="Tubulin/FtsZ, C-terminal domain"/>
    <property type="match status" value="1"/>
</dbReference>
<dbReference type="Gene3D" id="3.40.50.1440">
    <property type="entry name" value="Tubulin/FtsZ, GTPase domain"/>
    <property type="match status" value="1"/>
</dbReference>
<dbReference type="InterPro" id="IPR002452">
    <property type="entry name" value="Alpha_tubulin"/>
</dbReference>
<dbReference type="InterPro" id="IPR008280">
    <property type="entry name" value="Tub_FtsZ_C"/>
</dbReference>
<dbReference type="InterPro" id="IPR000217">
    <property type="entry name" value="Tubulin"/>
</dbReference>
<dbReference type="InterPro" id="IPR037103">
    <property type="entry name" value="Tubulin/FtsZ-like_C"/>
</dbReference>
<dbReference type="InterPro" id="IPR018316">
    <property type="entry name" value="Tubulin/FtsZ_2-layer-sand-dom"/>
</dbReference>
<dbReference type="InterPro" id="IPR036525">
    <property type="entry name" value="Tubulin/FtsZ_GTPase_sf"/>
</dbReference>
<dbReference type="InterPro" id="IPR023123">
    <property type="entry name" value="Tubulin_C"/>
</dbReference>
<dbReference type="InterPro" id="IPR017975">
    <property type="entry name" value="Tubulin_CS"/>
</dbReference>
<dbReference type="InterPro" id="IPR003008">
    <property type="entry name" value="Tubulin_FtsZ_GTPase"/>
</dbReference>
<dbReference type="PANTHER" id="PTHR11588">
    <property type="entry name" value="TUBULIN"/>
    <property type="match status" value="1"/>
</dbReference>
<dbReference type="Pfam" id="PF00091">
    <property type="entry name" value="Tubulin"/>
    <property type="match status" value="1"/>
</dbReference>
<dbReference type="Pfam" id="PF03953">
    <property type="entry name" value="Tubulin_C"/>
    <property type="match status" value="1"/>
</dbReference>
<dbReference type="PRINTS" id="PR01162">
    <property type="entry name" value="ALPHATUBULIN"/>
</dbReference>
<dbReference type="PRINTS" id="PR01161">
    <property type="entry name" value="TUBULIN"/>
</dbReference>
<dbReference type="SMART" id="SM00864">
    <property type="entry name" value="Tubulin"/>
    <property type="match status" value="1"/>
</dbReference>
<dbReference type="SMART" id="SM00865">
    <property type="entry name" value="Tubulin_C"/>
    <property type="match status" value="1"/>
</dbReference>
<dbReference type="SUPFAM" id="SSF55307">
    <property type="entry name" value="Tubulin C-terminal domain-like"/>
    <property type="match status" value="1"/>
</dbReference>
<dbReference type="SUPFAM" id="SSF52490">
    <property type="entry name" value="Tubulin nucleotide-binding domain-like"/>
    <property type="match status" value="1"/>
</dbReference>
<dbReference type="PROSITE" id="PS00227">
    <property type="entry name" value="TUBULIN"/>
    <property type="match status" value="1"/>
</dbReference>
<sequence length="449" mass="49577">MREVISIHVGQGGIQVGNACWELFCLEHGIQPDGQMPSDKTIGGGDDAFNTFFSETGAGKHVPRAVFLDLEPTVIDEVRTGTYRQLFHPEQLISGKEDAANNFARGHYTIGKEIVDLCLDRIRKLADNCTGLQGFLVFNSVGGGTGSGLGSLLLERLSVDYGKKSKLGFTIYPSPQVSTAVVEPYNSILSTHSLLEHTDVAVMLDNEAIYDICRRNLDIERPTYTNLNRLIAQVISSLTASLRFDGALNVDITEFQTNLVPYPRIHFMLSSYAPIISAEKAYHEQLSVAEITNSAFEPANMMAKCDPRHGKYMACSMMYRGDVVPKDVNASIATIKTKRTIQFVDWCPTGFKVGINYQPSTVVPGGDLAKVMRAVCMISNSTAIAEVFSRLDHKFDLMYAKRAFVHWYVGEGMEEGEFSEAREDLAALEKDYEEVGIETAEGEGEEEGY</sequence>
<accession>P10872</accession>
<protein>
    <recommendedName>
        <fullName>Tubulin alpha chain</fullName>
        <ecNumber evidence="2">3.6.5.-</ecNumber>
    </recommendedName>
</protein>
<keyword id="KW-0007">Acetylation</keyword>
<keyword id="KW-0963">Cytoplasm</keyword>
<keyword id="KW-0206">Cytoskeleton</keyword>
<keyword id="KW-0342">GTP-binding</keyword>
<keyword id="KW-0378">Hydrolase</keyword>
<keyword id="KW-0460">Magnesium</keyword>
<keyword id="KW-0479">Metal-binding</keyword>
<keyword id="KW-0493">Microtubule</keyword>
<keyword id="KW-0547">Nucleotide-binding</keyword>
<feature type="chain" id="PRO_0000048230" description="Tubulin alpha chain">
    <location>
        <begin position="1"/>
        <end position="449"/>
    </location>
</feature>
<feature type="active site" evidence="2">
    <location>
        <position position="254"/>
    </location>
</feature>
<feature type="binding site" evidence="2">
    <location>
        <position position="11"/>
    </location>
    <ligand>
        <name>GTP</name>
        <dbReference type="ChEBI" id="CHEBI:37565"/>
    </ligand>
</feature>
<feature type="binding site" evidence="2">
    <location>
        <position position="71"/>
    </location>
    <ligand>
        <name>GTP</name>
        <dbReference type="ChEBI" id="CHEBI:37565"/>
    </ligand>
</feature>
<feature type="binding site" evidence="2">
    <location>
        <position position="71"/>
    </location>
    <ligand>
        <name>Mg(2+)</name>
        <dbReference type="ChEBI" id="CHEBI:18420"/>
    </ligand>
</feature>
<feature type="binding site" evidence="2">
    <location>
        <position position="140"/>
    </location>
    <ligand>
        <name>GTP</name>
        <dbReference type="ChEBI" id="CHEBI:37565"/>
    </ligand>
</feature>
<feature type="binding site" evidence="2">
    <location>
        <position position="144"/>
    </location>
    <ligand>
        <name>GTP</name>
        <dbReference type="ChEBI" id="CHEBI:37565"/>
    </ligand>
</feature>
<feature type="binding site" evidence="2">
    <location>
        <position position="145"/>
    </location>
    <ligand>
        <name>GTP</name>
        <dbReference type="ChEBI" id="CHEBI:37565"/>
    </ligand>
</feature>
<feature type="binding site" evidence="2">
    <location>
        <position position="179"/>
    </location>
    <ligand>
        <name>GTP</name>
        <dbReference type="ChEBI" id="CHEBI:37565"/>
    </ligand>
</feature>
<feature type="binding site" evidence="2">
    <location>
        <position position="206"/>
    </location>
    <ligand>
        <name>GTP</name>
        <dbReference type="ChEBI" id="CHEBI:37565"/>
    </ligand>
</feature>
<feature type="binding site" evidence="2">
    <location>
        <position position="228"/>
    </location>
    <ligand>
        <name>GTP</name>
        <dbReference type="ChEBI" id="CHEBI:37565"/>
    </ligand>
</feature>
<feature type="site" description="Involved in polymerization">
    <location>
        <position position="449"/>
    </location>
</feature>
<feature type="modified residue" description="N6-acetyllysine" evidence="1">
    <location>
        <position position="40"/>
    </location>
</feature>